<reference key="1">
    <citation type="submission" date="2007-04" db="EMBL/GenBank/DDBJ databases">
        <title>Complete sequence of Shewanella putrefaciens CN-32.</title>
        <authorList>
            <consortium name="US DOE Joint Genome Institute"/>
            <person name="Copeland A."/>
            <person name="Lucas S."/>
            <person name="Lapidus A."/>
            <person name="Barry K."/>
            <person name="Detter J.C."/>
            <person name="Glavina del Rio T."/>
            <person name="Hammon N."/>
            <person name="Israni S."/>
            <person name="Dalin E."/>
            <person name="Tice H."/>
            <person name="Pitluck S."/>
            <person name="Chain P."/>
            <person name="Malfatti S."/>
            <person name="Shin M."/>
            <person name="Vergez L."/>
            <person name="Schmutz J."/>
            <person name="Larimer F."/>
            <person name="Land M."/>
            <person name="Hauser L."/>
            <person name="Kyrpides N."/>
            <person name="Mikhailova N."/>
            <person name="Romine M.F."/>
            <person name="Fredrickson J."/>
            <person name="Tiedje J."/>
            <person name="Richardson P."/>
        </authorList>
    </citation>
    <scope>NUCLEOTIDE SEQUENCE [LARGE SCALE GENOMIC DNA]</scope>
    <source>
        <strain>CN-32 / ATCC BAA-453</strain>
    </source>
</reference>
<protein>
    <recommendedName>
        <fullName evidence="1">Anthranilate phosphoribosyltransferase</fullName>
        <ecNumber evidence="1">2.4.2.18</ecNumber>
    </recommendedName>
</protein>
<keyword id="KW-0028">Amino-acid biosynthesis</keyword>
<keyword id="KW-0057">Aromatic amino acid biosynthesis</keyword>
<keyword id="KW-0328">Glycosyltransferase</keyword>
<keyword id="KW-0460">Magnesium</keyword>
<keyword id="KW-0479">Metal-binding</keyword>
<keyword id="KW-0808">Transferase</keyword>
<keyword id="KW-0822">Tryptophan biosynthesis</keyword>
<name>TRPD_SHEPC</name>
<dbReference type="EC" id="2.4.2.18" evidence="1"/>
<dbReference type="EMBL" id="CP000681">
    <property type="protein sequence ID" value="ABP76126.1"/>
    <property type="molecule type" value="Genomic_DNA"/>
</dbReference>
<dbReference type="SMR" id="A4Y843"/>
<dbReference type="STRING" id="319224.Sputcn32_2405"/>
<dbReference type="KEGG" id="spc:Sputcn32_2405"/>
<dbReference type="eggNOG" id="COG0547">
    <property type="taxonomic scope" value="Bacteria"/>
</dbReference>
<dbReference type="HOGENOM" id="CLU_034315_2_1_6"/>
<dbReference type="UniPathway" id="UPA00035">
    <property type="reaction ID" value="UER00041"/>
</dbReference>
<dbReference type="GO" id="GO:0005829">
    <property type="term" value="C:cytosol"/>
    <property type="evidence" value="ECO:0007669"/>
    <property type="project" value="TreeGrafter"/>
</dbReference>
<dbReference type="GO" id="GO:0004048">
    <property type="term" value="F:anthranilate phosphoribosyltransferase activity"/>
    <property type="evidence" value="ECO:0007669"/>
    <property type="project" value="UniProtKB-UniRule"/>
</dbReference>
<dbReference type="GO" id="GO:0000287">
    <property type="term" value="F:magnesium ion binding"/>
    <property type="evidence" value="ECO:0007669"/>
    <property type="project" value="UniProtKB-UniRule"/>
</dbReference>
<dbReference type="GO" id="GO:0000162">
    <property type="term" value="P:L-tryptophan biosynthetic process"/>
    <property type="evidence" value="ECO:0007669"/>
    <property type="project" value="UniProtKB-UniRule"/>
</dbReference>
<dbReference type="FunFam" id="3.40.1030.10:FF:000002">
    <property type="entry name" value="Anthranilate phosphoribosyltransferase"/>
    <property type="match status" value="1"/>
</dbReference>
<dbReference type="Gene3D" id="3.40.1030.10">
    <property type="entry name" value="Nucleoside phosphorylase/phosphoribosyltransferase catalytic domain"/>
    <property type="match status" value="1"/>
</dbReference>
<dbReference type="Gene3D" id="1.20.970.10">
    <property type="entry name" value="Transferase, Pyrimidine Nucleoside Phosphorylase, Chain C"/>
    <property type="match status" value="1"/>
</dbReference>
<dbReference type="HAMAP" id="MF_00211">
    <property type="entry name" value="TrpD"/>
    <property type="match status" value="1"/>
</dbReference>
<dbReference type="InterPro" id="IPR005940">
    <property type="entry name" value="Anthranilate_Pribosyl_Tfrase"/>
</dbReference>
<dbReference type="InterPro" id="IPR000312">
    <property type="entry name" value="Glycosyl_Trfase_fam3"/>
</dbReference>
<dbReference type="InterPro" id="IPR017459">
    <property type="entry name" value="Glycosyl_Trfase_fam3_N_dom"/>
</dbReference>
<dbReference type="InterPro" id="IPR036320">
    <property type="entry name" value="Glycosyl_Trfase_fam3_N_dom_sf"/>
</dbReference>
<dbReference type="InterPro" id="IPR035902">
    <property type="entry name" value="Nuc_phospho_transferase"/>
</dbReference>
<dbReference type="NCBIfam" id="TIGR01245">
    <property type="entry name" value="trpD"/>
    <property type="match status" value="1"/>
</dbReference>
<dbReference type="PANTHER" id="PTHR43285">
    <property type="entry name" value="ANTHRANILATE PHOSPHORIBOSYLTRANSFERASE"/>
    <property type="match status" value="1"/>
</dbReference>
<dbReference type="PANTHER" id="PTHR43285:SF2">
    <property type="entry name" value="ANTHRANILATE PHOSPHORIBOSYLTRANSFERASE"/>
    <property type="match status" value="1"/>
</dbReference>
<dbReference type="Pfam" id="PF02885">
    <property type="entry name" value="Glycos_trans_3N"/>
    <property type="match status" value="1"/>
</dbReference>
<dbReference type="Pfam" id="PF00591">
    <property type="entry name" value="Glycos_transf_3"/>
    <property type="match status" value="1"/>
</dbReference>
<dbReference type="SUPFAM" id="SSF52418">
    <property type="entry name" value="Nucleoside phosphorylase/phosphoribosyltransferase catalytic domain"/>
    <property type="match status" value="1"/>
</dbReference>
<dbReference type="SUPFAM" id="SSF47648">
    <property type="entry name" value="Nucleoside phosphorylase/phosphoribosyltransferase N-terminal domain"/>
    <property type="match status" value="1"/>
</dbReference>
<evidence type="ECO:0000255" key="1">
    <source>
        <dbReference type="HAMAP-Rule" id="MF_00211"/>
    </source>
</evidence>
<sequence>MSTNHIQPLLDLLYQGKSLSREQAFEIFSALIRGEMSEATMAGMLVALKMRGETIDEISGAADAMRAAAKTFPYSNGDSLGNGIVDIVGTGGDGFNTINISTTAAFVAAAAGAKVAKHGNRSVSSKSGSSDLLAQFGIDLTMSPDTASRCLDALNLCFLFAPHYHGGVKHAGPVRQALKTRTLFNVLGPLINPARPEFMLLGVYSPELVLPIAKVLKALGTKRAMVVHGSGLDEVALHGNTQVAELKDGDIIEYQLTPADLGVPLAQISELEGGEPAQNALITEAILRGRGTDAHANAVAINAGCALYVCGIADSVKTGTLLALSTIQSGKAFELLSQLAKVSSETKE</sequence>
<proteinExistence type="inferred from homology"/>
<organism>
    <name type="scientific">Shewanella putrefaciens (strain CN-32 / ATCC BAA-453)</name>
    <dbReference type="NCBI Taxonomy" id="319224"/>
    <lineage>
        <taxon>Bacteria</taxon>
        <taxon>Pseudomonadati</taxon>
        <taxon>Pseudomonadota</taxon>
        <taxon>Gammaproteobacteria</taxon>
        <taxon>Alteromonadales</taxon>
        <taxon>Shewanellaceae</taxon>
        <taxon>Shewanella</taxon>
    </lineage>
</organism>
<gene>
    <name evidence="1" type="primary">trpD</name>
    <name type="ordered locus">Sputcn32_2405</name>
</gene>
<comment type="function">
    <text evidence="1">Catalyzes the transfer of the phosphoribosyl group of 5-phosphorylribose-1-pyrophosphate (PRPP) to anthranilate to yield N-(5'-phosphoribosyl)-anthranilate (PRA).</text>
</comment>
<comment type="catalytic activity">
    <reaction evidence="1">
        <text>N-(5-phospho-beta-D-ribosyl)anthranilate + diphosphate = 5-phospho-alpha-D-ribose 1-diphosphate + anthranilate</text>
        <dbReference type="Rhea" id="RHEA:11768"/>
        <dbReference type="ChEBI" id="CHEBI:16567"/>
        <dbReference type="ChEBI" id="CHEBI:18277"/>
        <dbReference type="ChEBI" id="CHEBI:33019"/>
        <dbReference type="ChEBI" id="CHEBI:58017"/>
        <dbReference type="EC" id="2.4.2.18"/>
    </reaction>
</comment>
<comment type="cofactor">
    <cofactor evidence="1">
        <name>Mg(2+)</name>
        <dbReference type="ChEBI" id="CHEBI:18420"/>
    </cofactor>
    <text evidence="1">Binds 2 magnesium ions per monomer.</text>
</comment>
<comment type="pathway">
    <text evidence="1">Amino-acid biosynthesis; L-tryptophan biosynthesis; L-tryptophan from chorismate: step 2/5.</text>
</comment>
<comment type="subunit">
    <text evidence="1">Homodimer.</text>
</comment>
<comment type="similarity">
    <text evidence="1">Belongs to the anthranilate phosphoribosyltransferase family.</text>
</comment>
<accession>A4Y843</accession>
<feature type="chain" id="PRO_1000043065" description="Anthranilate phosphoribosyltransferase">
    <location>
        <begin position="1"/>
        <end position="348"/>
    </location>
</feature>
<feature type="binding site" evidence="1">
    <location>
        <position position="89"/>
    </location>
    <ligand>
        <name>5-phospho-alpha-D-ribose 1-diphosphate</name>
        <dbReference type="ChEBI" id="CHEBI:58017"/>
    </ligand>
</feature>
<feature type="binding site" evidence="1">
    <location>
        <position position="89"/>
    </location>
    <ligand>
        <name>anthranilate</name>
        <dbReference type="ChEBI" id="CHEBI:16567"/>
        <label>1</label>
    </ligand>
</feature>
<feature type="binding site" evidence="1">
    <location>
        <begin position="92"/>
        <end position="93"/>
    </location>
    <ligand>
        <name>5-phospho-alpha-D-ribose 1-diphosphate</name>
        <dbReference type="ChEBI" id="CHEBI:58017"/>
    </ligand>
</feature>
<feature type="binding site" evidence="1">
    <location>
        <position position="97"/>
    </location>
    <ligand>
        <name>5-phospho-alpha-D-ribose 1-diphosphate</name>
        <dbReference type="ChEBI" id="CHEBI:58017"/>
    </ligand>
</feature>
<feature type="binding site" evidence="1">
    <location>
        <begin position="99"/>
        <end position="102"/>
    </location>
    <ligand>
        <name>5-phospho-alpha-D-ribose 1-diphosphate</name>
        <dbReference type="ChEBI" id="CHEBI:58017"/>
    </ligand>
</feature>
<feature type="binding site" evidence="1">
    <location>
        <position position="101"/>
    </location>
    <ligand>
        <name>Mg(2+)</name>
        <dbReference type="ChEBI" id="CHEBI:18420"/>
        <label>1</label>
    </ligand>
</feature>
<feature type="binding site" evidence="1">
    <location>
        <begin position="117"/>
        <end position="125"/>
    </location>
    <ligand>
        <name>5-phospho-alpha-D-ribose 1-diphosphate</name>
        <dbReference type="ChEBI" id="CHEBI:58017"/>
    </ligand>
</feature>
<feature type="binding site" evidence="1">
    <location>
        <position position="120"/>
    </location>
    <ligand>
        <name>anthranilate</name>
        <dbReference type="ChEBI" id="CHEBI:16567"/>
        <label>1</label>
    </ligand>
</feature>
<feature type="binding site" evidence="1">
    <location>
        <position position="129"/>
    </location>
    <ligand>
        <name>5-phospho-alpha-D-ribose 1-diphosphate</name>
        <dbReference type="ChEBI" id="CHEBI:58017"/>
    </ligand>
</feature>
<feature type="binding site" evidence="1">
    <location>
        <position position="175"/>
    </location>
    <ligand>
        <name>anthranilate</name>
        <dbReference type="ChEBI" id="CHEBI:16567"/>
        <label>2</label>
    </ligand>
</feature>
<feature type="binding site" evidence="1">
    <location>
        <position position="233"/>
    </location>
    <ligand>
        <name>Mg(2+)</name>
        <dbReference type="ChEBI" id="CHEBI:18420"/>
        <label>2</label>
    </ligand>
</feature>
<feature type="binding site" evidence="1">
    <location>
        <position position="234"/>
    </location>
    <ligand>
        <name>Mg(2+)</name>
        <dbReference type="ChEBI" id="CHEBI:18420"/>
        <label>1</label>
    </ligand>
</feature>
<feature type="binding site" evidence="1">
    <location>
        <position position="234"/>
    </location>
    <ligand>
        <name>Mg(2+)</name>
        <dbReference type="ChEBI" id="CHEBI:18420"/>
        <label>2</label>
    </ligand>
</feature>